<protein>
    <recommendedName>
        <fullName evidence="5">GDP-mannose-dependent alpha-(1-6)-phosphatidylinositol monomannoside mannosyltransferase</fullName>
        <ecNumber evidence="3">2.4.1.346</ecNumber>
    </recommendedName>
    <alternativeName>
        <fullName evidence="5">Alpha-D-mannose-alpha-(1-6)-phosphatidylmyo-inositol-mannosyltransferase</fullName>
    </alternativeName>
    <alternativeName>
        <fullName evidence="5">Alpha-mannosyltransferase</fullName>
        <shortName evidence="5">Alpha-ManT</shortName>
    </alternativeName>
    <alternativeName>
        <fullName evidence="6">Guanosine diphosphomannose-phosphatidyl-inositol alpha-mannosyltransferase</fullName>
    </alternativeName>
    <alternativeName>
        <fullName evidence="5">Phosphatidylinositol alpha-mannosyltransferase</fullName>
        <shortName evidence="5">PI alpha-mannosyltransferase</shortName>
    </alternativeName>
</protein>
<sequence>MLLVTNDFPPRRGGIQSYLEAFVGELVRTHELTVYAPKWKGAEEYDEKAARSGYRVVRHPTTLMLPEPTVASRMKRLIGEHDIETVWFGAAAPLALLGPLARRAGARRIVASTHGHEVGWSMLPVARTALRRIGNDADVVTFVSRYTRSRFASAFGPSAALEHLPPGVDTDRFAPDPDARARMRERYGLGDRPVVVCLSRLVPRKGQDMLIRALPELRRRVPDTALAIVGGGPYLETLQRMASDLGVAEHVVFTRGIPAEELPAHHAMADVFAMPCRTRGAGLDVEGLGIVYLEASACGVPVVAGRSGGAPETVLDGKTGTVVDGTDVDAITTAVGDLLADPRRAAAMGVAGRHWALDNWQWRTRGARLAELLSGRREARQA</sequence>
<organism>
    <name type="scientific">Mycolicibacterium smegmatis (strain ATCC 700084 / mc(2)155)</name>
    <name type="common">Mycobacterium smegmatis</name>
    <dbReference type="NCBI Taxonomy" id="246196"/>
    <lineage>
        <taxon>Bacteria</taxon>
        <taxon>Bacillati</taxon>
        <taxon>Actinomycetota</taxon>
        <taxon>Actinomycetes</taxon>
        <taxon>Mycobacteriales</taxon>
        <taxon>Mycobacteriaceae</taxon>
        <taxon>Mycolicibacterium</taxon>
    </lineage>
</organism>
<comment type="function">
    <text evidence="2 3">Involved in the biosynthesis of phosphatidyl-myo-inositol mannosides (PIM) which are early precursors in the biosynthesis of lipomannans (LM) and lipoarabinomannans (LAM) (PubMed:10531370, PubMed:19638342). Catalyzes the addition of a mannosyl residue from GDP-D-mannose (GDP-Man) to the position 6 of a phosphatidyl-myo-inositol bearing an alpha-1,2-linked mannose residue (PIM1) to generate phosphatidyl-myo-inositol bearing alpha-1,2- and alpha-1,6-linked mannose residues (Ac1PIM2) (PubMed:19638342). PimB also catalyzes the addition of a mannosyl residue from GDP-Man to the position 6 of phosphatidyl-myo-inositol bearing an acylated alpha-1,2-linked mannose residue (Ac1PIM1) to generate monoacylated phosphatidyl-myo-inositol bearing alpha-1,2- and alpha-1,6-linked mannose residues (Ac1PIM2) (PubMed:19638342). The addition of the second mannosyl residue by PimB preferentially occurs before the acylation of the mannosyl residue transferred by PimA. Also able to transfer a mannosyl residue from GDP-Man to the position 6 of a phosphatidyl-myo-inositol (PI), but this reaction is very slow (PubMed:19638342).</text>
</comment>
<comment type="catalytic activity">
    <reaction evidence="3">
        <text>a 1,2-diacyl-sn-glycero-3-phospho-[alpha-D-mannopyranosyl-(1&lt;-&gt;6)-D-myo-inositol] + GDP-alpha-D-mannose = a 2,6-O-bis(alpha-D-mannopyranosyl)-1-phosphatidyl-1D-myo-inositol + GDP + H(+)</text>
        <dbReference type="Rhea" id="RHEA:52440"/>
        <dbReference type="ChEBI" id="CHEBI:15378"/>
        <dbReference type="ChEBI" id="CHEBI:57527"/>
        <dbReference type="ChEBI" id="CHEBI:58189"/>
        <dbReference type="ChEBI" id="CHEBI:87673"/>
        <dbReference type="ChEBI" id="CHEBI:136624"/>
        <dbReference type="EC" id="2.4.1.346"/>
    </reaction>
</comment>
<comment type="catalytic activity">
    <reaction evidence="3">
        <text>a 1,2-diacyl-sn-glycero-3-phospho-[alpha-D-6-acyl-mannopyranosyl-(1&lt;-&gt;6)-D-myo-inositol] + GDP-alpha-D-mannose = a 2-O-(alpha-D-mannosyl)-6-O-(6-O-acyl-alpha-D-mannosyl)-1-phosphatidyl-1D-myo-inositol + GDP + H(+)</text>
        <dbReference type="Rhea" id="RHEA:52444"/>
        <dbReference type="ChEBI" id="CHEBI:15378"/>
        <dbReference type="ChEBI" id="CHEBI:57527"/>
        <dbReference type="ChEBI" id="CHEBI:58189"/>
        <dbReference type="ChEBI" id="CHEBI:88053"/>
        <dbReference type="ChEBI" id="CHEBI:136625"/>
        <dbReference type="EC" id="2.4.1.346"/>
    </reaction>
</comment>
<comment type="pathway">
    <text evidence="7">Phospholipid metabolism; phosphatidylinositol metabolism.</text>
</comment>
<comment type="similarity">
    <text evidence="6">Belongs to the glycosyltransferase group 1 family. Glycosyltransferase 4 subfamily.</text>
</comment>
<comment type="sequence caution" evidence="6">
    <conflict type="erroneous initiation">
        <sequence resource="EMBL-CDS" id="AFP40611"/>
    </conflict>
    <text>Extended N-terminus.</text>
</comment>
<feature type="chain" id="PRO_0000393735" description="GDP-mannose-dependent alpha-(1-6)-phosphatidylinositol monomannoside mannosyltransferase">
    <location>
        <begin position="1"/>
        <end position="382"/>
    </location>
</feature>
<feature type="binding site" evidence="1">
    <location>
        <position position="200"/>
    </location>
    <ligand>
        <name>GDP-alpha-D-mannose</name>
        <dbReference type="ChEBI" id="CHEBI:57527"/>
    </ligand>
</feature>
<feature type="binding site" evidence="1">
    <location>
        <position position="205"/>
    </location>
    <ligand>
        <name>GDP-alpha-D-mannose</name>
        <dbReference type="ChEBI" id="CHEBI:57527"/>
    </ligand>
</feature>
<feature type="binding site" evidence="1">
    <location>
        <position position="257"/>
    </location>
    <ligand>
        <name>GDP-alpha-D-mannose</name>
        <dbReference type="ChEBI" id="CHEBI:57527"/>
    </ligand>
</feature>
<feature type="binding site" evidence="1">
    <location>
        <position position="294"/>
    </location>
    <ligand>
        <name>GDP-alpha-D-mannose</name>
        <dbReference type="ChEBI" id="CHEBI:57527"/>
    </ligand>
</feature>
<gene>
    <name evidence="4" type="primary">pimB</name>
    <name type="ordered locus">MSMEG_4253</name>
    <name type="ordered locus">MSMEI_4154</name>
</gene>
<proteinExistence type="evidence at protein level"/>
<dbReference type="EC" id="2.4.1.346" evidence="3"/>
<dbReference type="EMBL" id="CP000480">
    <property type="protein sequence ID" value="ABK74170.1"/>
    <property type="molecule type" value="Genomic_DNA"/>
</dbReference>
<dbReference type="EMBL" id="CP001663">
    <property type="protein sequence ID" value="AFP40611.1"/>
    <property type="status" value="ALT_INIT"/>
    <property type="molecule type" value="Genomic_DNA"/>
</dbReference>
<dbReference type="RefSeq" id="YP_888531.1">
    <property type="nucleotide sequence ID" value="NC_008596.1"/>
</dbReference>
<dbReference type="SMR" id="A0R043"/>
<dbReference type="STRING" id="246196.MSMEG_4253"/>
<dbReference type="CAZy" id="GT4">
    <property type="family name" value="Glycosyltransferase Family 4"/>
</dbReference>
<dbReference type="PaxDb" id="246196-MSMEI_4154"/>
<dbReference type="KEGG" id="msg:MSMEI_4154"/>
<dbReference type="KEGG" id="msm:MSMEG_4253"/>
<dbReference type="PATRIC" id="fig|246196.19.peg.4174"/>
<dbReference type="eggNOG" id="COG0438">
    <property type="taxonomic scope" value="Bacteria"/>
</dbReference>
<dbReference type="OrthoDB" id="9808602at2"/>
<dbReference type="BRENDA" id="2.4.1.346">
    <property type="organism ID" value="3512"/>
</dbReference>
<dbReference type="UniPathway" id="UPA00949"/>
<dbReference type="Proteomes" id="UP000000757">
    <property type="component" value="Chromosome"/>
</dbReference>
<dbReference type="Proteomes" id="UP000006158">
    <property type="component" value="Chromosome"/>
</dbReference>
<dbReference type="GO" id="GO:0016020">
    <property type="term" value="C:membrane"/>
    <property type="evidence" value="ECO:0007669"/>
    <property type="project" value="GOC"/>
</dbReference>
<dbReference type="GO" id="GO:0033164">
    <property type="term" value="F:glycolipid 1,6-alpha-mannosyltransferase activity"/>
    <property type="evidence" value="ECO:0000314"/>
    <property type="project" value="UniProtKB"/>
</dbReference>
<dbReference type="GO" id="GO:0043750">
    <property type="term" value="F:phosphatidylinositol alpha-mannosyltransferase activity"/>
    <property type="evidence" value="ECO:0000314"/>
    <property type="project" value="UniProtKB"/>
</dbReference>
<dbReference type="GO" id="GO:0009247">
    <property type="term" value="P:glycolipid biosynthetic process"/>
    <property type="evidence" value="ECO:0000314"/>
    <property type="project" value="UniProtKB"/>
</dbReference>
<dbReference type="GO" id="GO:0046488">
    <property type="term" value="P:phosphatidylinositol metabolic process"/>
    <property type="evidence" value="ECO:0007669"/>
    <property type="project" value="UniProtKB-UniPathway"/>
</dbReference>
<dbReference type="GO" id="GO:0008654">
    <property type="term" value="P:phospholipid biosynthetic process"/>
    <property type="evidence" value="ECO:0007669"/>
    <property type="project" value="UniProtKB-KW"/>
</dbReference>
<dbReference type="CDD" id="cd03801">
    <property type="entry name" value="GT4_PimA-like"/>
    <property type="match status" value="1"/>
</dbReference>
<dbReference type="FunFam" id="3.40.50.2000:FF:000069">
    <property type="entry name" value="Alpha-(1-6)-phosphatidylinositol monomannoside mannosyltransferase"/>
    <property type="match status" value="1"/>
</dbReference>
<dbReference type="FunFam" id="3.40.50.2000:FF:000115">
    <property type="entry name" value="Alpha-(1-6)-phosphatidylinositol monomannoside mannosyltransferase"/>
    <property type="match status" value="1"/>
</dbReference>
<dbReference type="Gene3D" id="3.40.50.2000">
    <property type="entry name" value="Glycogen Phosphorylase B"/>
    <property type="match status" value="2"/>
</dbReference>
<dbReference type="InterPro" id="IPR001296">
    <property type="entry name" value="Glyco_trans_1"/>
</dbReference>
<dbReference type="InterPro" id="IPR028098">
    <property type="entry name" value="Glyco_trans_4-like_N"/>
</dbReference>
<dbReference type="InterPro" id="IPR050194">
    <property type="entry name" value="Glycosyltransferase_grp1"/>
</dbReference>
<dbReference type="PANTHER" id="PTHR45947">
    <property type="entry name" value="SULFOQUINOVOSYL TRANSFERASE SQD2"/>
    <property type="match status" value="1"/>
</dbReference>
<dbReference type="PANTHER" id="PTHR45947:SF3">
    <property type="entry name" value="SULFOQUINOVOSYL TRANSFERASE SQD2"/>
    <property type="match status" value="1"/>
</dbReference>
<dbReference type="Pfam" id="PF13439">
    <property type="entry name" value="Glyco_transf_4"/>
    <property type="match status" value="1"/>
</dbReference>
<dbReference type="Pfam" id="PF00534">
    <property type="entry name" value="Glycos_transf_1"/>
    <property type="match status" value="1"/>
</dbReference>
<dbReference type="SUPFAM" id="SSF53756">
    <property type="entry name" value="UDP-Glycosyltransferase/glycogen phosphorylase"/>
    <property type="match status" value="1"/>
</dbReference>
<reference key="1">
    <citation type="submission" date="2006-10" db="EMBL/GenBank/DDBJ databases">
        <authorList>
            <person name="Fleischmann R.D."/>
            <person name="Dodson R.J."/>
            <person name="Haft D.H."/>
            <person name="Merkel J.S."/>
            <person name="Nelson W.C."/>
            <person name="Fraser C.M."/>
        </authorList>
    </citation>
    <scope>NUCLEOTIDE SEQUENCE [LARGE SCALE GENOMIC DNA]</scope>
    <source>
        <strain>ATCC 700084 / mc(2)155</strain>
    </source>
</reference>
<reference key="2">
    <citation type="journal article" date="2007" name="Genome Biol.">
        <title>Interrupted coding sequences in Mycobacterium smegmatis: authentic mutations or sequencing errors?</title>
        <authorList>
            <person name="Deshayes C."/>
            <person name="Perrodou E."/>
            <person name="Gallien S."/>
            <person name="Euphrasie D."/>
            <person name="Schaeffer C."/>
            <person name="Van-Dorsselaer A."/>
            <person name="Poch O."/>
            <person name="Lecompte O."/>
            <person name="Reyrat J.-M."/>
        </authorList>
    </citation>
    <scope>NUCLEOTIDE SEQUENCE [LARGE SCALE GENOMIC DNA]</scope>
    <source>
        <strain>ATCC 700084 / mc(2)155</strain>
    </source>
</reference>
<reference key="3">
    <citation type="journal article" date="2009" name="Genome Res.">
        <title>Ortho-proteogenomics: multiple proteomes investigation through orthology and a new MS-based protocol.</title>
        <authorList>
            <person name="Gallien S."/>
            <person name="Perrodou E."/>
            <person name="Carapito C."/>
            <person name="Deshayes C."/>
            <person name="Reyrat J.-M."/>
            <person name="Van Dorsselaer A."/>
            <person name="Poch O."/>
            <person name="Schaeffer C."/>
            <person name="Lecompte O."/>
        </authorList>
    </citation>
    <scope>NUCLEOTIDE SEQUENCE [LARGE SCALE GENOMIC DNA]</scope>
    <source>
        <strain>ATCC 700084 / mc(2)155</strain>
    </source>
</reference>
<reference key="4">
    <citation type="journal article" date="1999" name="J. Biol. Chem.">
        <title>The pimB gene of Mycobacterium tuberculosis encodes a mannosyltransferase involved in lipoarabinomannan biosynthesis.</title>
        <authorList>
            <person name="Schaeffer M.L."/>
            <person name="Khoo K.H."/>
            <person name="Besra G.S."/>
            <person name="Chatterjee D."/>
            <person name="Brennan P.J."/>
            <person name="Belisle J.T."/>
            <person name="Inamine J.M."/>
        </authorList>
    </citation>
    <scope>FUNCTION</scope>
</reference>
<reference key="5">
    <citation type="journal article" date="2009" name="J. Biol. Chem.">
        <title>New insights into the early steps of phosphatidylinositol mannoside biosynthesis in mycobacteria: PimB' is an essential enzyme of Mycobacterium smegmatis.</title>
        <authorList>
            <person name="Guerin M.E."/>
            <person name="Kaur D."/>
            <person name="Somashekar B.S."/>
            <person name="Gibbs S."/>
            <person name="Gest P."/>
            <person name="Chatterjee D."/>
            <person name="Brennan P.J."/>
            <person name="Jackson M."/>
        </authorList>
    </citation>
    <scope>FUNCTION</scope>
    <scope>CATALYTIC ACTIVITY</scope>
    <scope>PATHWAY</scope>
    <scope>SUBSTRATE SPECIFICITY</scope>
</reference>
<name>PIMB_MYCS2</name>
<evidence type="ECO:0000250" key="1">
    <source>
        <dbReference type="UniProtKB" id="Q8NNK8"/>
    </source>
</evidence>
<evidence type="ECO:0000269" key="2">
    <source>
    </source>
</evidence>
<evidence type="ECO:0000269" key="3">
    <source>
    </source>
</evidence>
<evidence type="ECO:0000303" key="4">
    <source>
    </source>
</evidence>
<evidence type="ECO:0000303" key="5">
    <source>
    </source>
</evidence>
<evidence type="ECO:0000305" key="6"/>
<evidence type="ECO:0000305" key="7">
    <source>
    </source>
</evidence>
<keyword id="KW-0328">Glycosyltransferase</keyword>
<keyword id="KW-0444">Lipid biosynthesis</keyword>
<keyword id="KW-0443">Lipid metabolism</keyword>
<keyword id="KW-0594">Phospholipid biosynthesis</keyword>
<keyword id="KW-1208">Phospholipid metabolism</keyword>
<keyword id="KW-1185">Reference proteome</keyword>
<keyword id="KW-0808">Transferase</keyword>
<keyword id="KW-0843">Virulence</keyword>
<accession>A0R043</accession>
<accession>I7GBP8</accession>